<feature type="chain" id="PRO_0000316920" description="Capsid protein">
    <location>
        <begin position="1"/>
        <end position="244"/>
    </location>
</feature>
<feature type="region of interest" description="Disordered" evidence="2">
    <location>
        <begin position="1"/>
        <end position="39"/>
    </location>
</feature>
<feature type="short sequence motif" description="Bipartite nuclear localization signal" evidence="1">
    <location>
        <begin position="1"/>
        <end position="24"/>
    </location>
</feature>
<organismHost>
    <name type="scientific">Avena sativa</name>
    <name type="common">Oat</name>
    <dbReference type="NCBI Taxonomy" id="4498"/>
</organismHost>
<organismHost>
    <name type="scientific">Axonopus compressus</name>
    <dbReference type="NCBI Taxonomy" id="217170"/>
</organismHost>
<organismHost>
    <name type="scientific">Cenchrus americanus</name>
    <name type="common">Pearl millet</name>
    <name type="synonym">Pennisetum glaucum</name>
    <dbReference type="NCBI Taxonomy" id="4543"/>
</organismHost>
<organismHost>
    <name type="scientific">Cenchrus polystachios</name>
    <dbReference type="NCBI Taxonomy" id="281129"/>
</organismHost>
<organismHost>
    <name type="scientific">Coix lacryma-jobi</name>
    <name type="common">Job's tears</name>
    <dbReference type="NCBI Taxonomy" id="4505"/>
</organismHost>
<organismHost>
    <name type="scientific">Dactyloctenium aegyptium</name>
    <dbReference type="NCBI Taxonomy" id="270102"/>
</organismHost>
<organismHost>
    <name type="scientific">Digitaria</name>
    <dbReference type="NCBI Taxonomy" id="66017"/>
</organismHost>
<organismHost>
    <name type="scientific">Echinochloa colona</name>
    <dbReference type="NCBI Taxonomy" id="90396"/>
</organismHost>
<organismHost>
    <name type="scientific">Eleusine coracana</name>
    <name type="common">Indian finger millet</name>
    <name type="synonym">Ragi</name>
    <dbReference type="NCBI Taxonomy" id="4511"/>
</organismHost>
<organismHost>
    <name type="scientific">Eleusine indica</name>
    <name type="common">Goosegrass</name>
    <name type="synonym">Cynosurus indicus</name>
    <dbReference type="NCBI Taxonomy" id="29674"/>
</organismHost>
<organismHost>
    <name type="scientific">Hordeum vulgare</name>
    <name type="common">Barley</name>
    <dbReference type="NCBI Taxonomy" id="4513"/>
</organismHost>
<organismHost>
    <name type="scientific">Megathyrsus maximus</name>
    <dbReference type="NCBI Taxonomy" id="59788"/>
</organismHost>
<organismHost>
    <name type="scientific">Melinis repens</name>
    <name type="common">Red Natal grass</name>
    <name type="synonym">Rhynchelytrum repens</name>
    <dbReference type="NCBI Taxonomy" id="29709"/>
</organismHost>
<organismHost>
    <name type="scientific">Oryza glaberrima</name>
    <name type="common">African rice</name>
    <dbReference type="NCBI Taxonomy" id="4538"/>
</organismHost>
<organismHost>
    <name type="scientific">Oryza sativa</name>
    <name type="common">Rice</name>
    <dbReference type="NCBI Taxonomy" id="4530"/>
</organismHost>
<organismHost>
    <name type="scientific">Paspalum conjugatum</name>
    <name type="common">Hilo grass</name>
    <dbReference type="NCBI Taxonomy" id="158143"/>
</organismHost>
<organismHost>
    <name type="scientific">Paspalum notatum</name>
    <name type="common">Bahia grass</name>
    <dbReference type="NCBI Taxonomy" id="147272"/>
</organismHost>
<organismHost>
    <name type="scientific">Paspalum scrobiculatum</name>
    <dbReference type="NCBI Taxonomy" id="173849"/>
</organismHost>
<organismHost>
    <name type="scientific">Rottboellia cochinchinensis</name>
    <dbReference type="NCBI Taxonomy" id="300125"/>
</organismHost>
<organismHost>
    <name type="scientific">Saccharum officinarum</name>
    <name type="common">Sugarcane</name>
    <dbReference type="NCBI Taxonomy" id="4547"/>
</organismHost>
<organismHost>
    <name type="scientific">Setaria barbata</name>
    <dbReference type="NCBI Taxonomy" id="192628"/>
</organismHost>
<organismHost>
    <name type="scientific">Triticum aestivum</name>
    <name type="common">Wheat</name>
    <dbReference type="NCBI Taxonomy" id="4565"/>
</organismHost>
<organismHost>
    <name type="scientific">Urochloa deflexa</name>
    <dbReference type="NCBI Taxonomy" id="240436"/>
</organismHost>
<organismHost>
    <name type="scientific">Zea mays</name>
    <name type="common">Maize</name>
    <dbReference type="NCBI Taxonomy" id="4577"/>
</organismHost>
<reference key="1">
    <citation type="journal article" date="2001" name="Arch. Virol.">
        <title>The relative infectivities and genomic characterisation of three distinct mastreviruses from South Africa.</title>
        <authorList>
            <person name="Schnippenkoetter W.H."/>
            <person name="Martin D.P."/>
            <person name="Hughes F.L."/>
            <person name="Fyvie M."/>
            <person name="Willment J.A."/>
            <person name="James D."/>
            <person name="von Wechmar M.B."/>
            <person name="Rybicki E.P."/>
        </authorList>
    </citation>
    <scope>NUCLEOTIDE SEQUENCE [GENOMIC DNA]</scope>
</reference>
<dbReference type="EMBL" id="AF007881">
    <property type="protein sequence ID" value="AAB63455.1"/>
    <property type="molecule type" value="Genomic_DNA"/>
</dbReference>
<dbReference type="SMR" id="O40985"/>
<dbReference type="Proteomes" id="UP000008872">
    <property type="component" value="Genome"/>
</dbReference>
<dbReference type="GO" id="GO:0043657">
    <property type="term" value="C:host cell"/>
    <property type="evidence" value="ECO:0007669"/>
    <property type="project" value="GOC"/>
</dbReference>
<dbReference type="GO" id="GO:0042025">
    <property type="term" value="C:host cell nucleus"/>
    <property type="evidence" value="ECO:0007669"/>
    <property type="project" value="UniProtKB-SubCell"/>
</dbReference>
<dbReference type="GO" id="GO:0039615">
    <property type="term" value="C:T=1 icosahedral viral capsid"/>
    <property type="evidence" value="ECO:0007669"/>
    <property type="project" value="UniProtKB-KW"/>
</dbReference>
<dbReference type="GO" id="GO:0003677">
    <property type="term" value="F:DNA binding"/>
    <property type="evidence" value="ECO:0007669"/>
    <property type="project" value="UniProtKB-KW"/>
</dbReference>
<dbReference type="GO" id="GO:0005198">
    <property type="term" value="F:structural molecule activity"/>
    <property type="evidence" value="ECO:0007669"/>
    <property type="project" value="InterPro"/>
</dbReference>
<dbReference type="GO" id="GO:0046718">
    <property type="term" value="P:symbiont entry into host cell"/>
    <property type="evidence" value="ECO:0007669"/>
    <property type="project" value="UniProtKB-KW"/>
</dbReference>
<dbReference type="GO" id="GO:0075732">
    <property type="term" value="P:viral penetration into host nucleus"/>
    <property type="evidence" value="ECO:0007669"/>
    <property type="project" value="UniProtKB-KW"/>
</dbReference>
<dbReference type="Gene3D" id="2.60.120.20">
    <property type="match status" value="1"/>
</dbReference>
<dbReference type="InterPro" id="IPR000143">
    <property type="entry name" value="Gemcoat_MSV"/>
</dbReference>
<dbReference type="InterPro" id="IPR000263">
    <property type="entry name" value="GV_A/BR1_coat"/>
</dbReference>
<dbReference type="InterPro" id="IPR029053">
    <property type="entry name" value="Viral_coat"/>
</dbReference>
<dbReference type="Pfam" id="PF00844">
    <property type="entry name" value="Gemini_coat"/>
    <property type="match status" value="1"/>
</dbReference>
<dbReference type="PRINTS" id="PR00223">
    <property type="entry name" value="GEMCOATARBR1"/>
</dbReference>
<dbReference type="PRINTS" id="PR00226">
    <property type="entry name" value="GEMCOATMSV"/>
</dbReference>
<accession>O40985</accession>
<protein>
    <recommendedName>
        <fullName>Capsid protein</fullName>
    </recommendedName>
    <alternativeName>
        <fullName>Coat protein</fullName>
        <shortName>CP</shortName>
    </alternativeName>
</protein>
<keyword id="KW-0167">Capsid protein</keyword>
<keyword id="KW-0238">DNA-binding</keyword>
<keyword id="KW-1048">Host nucleus</keyword>
<keyword id="KW-1140">T=1 icosahedral capsid protein</keyword>
<keyword id="KW-1163">Viral penetration into host nucleus</keyword>
<keyword id="KW-0946">Virion</keyword>
<keyword id="KW-1160">Virus entry into host cell</keyword>
<comment type="function">
    <text evidence="1">Encapsidates the viral genome into characteristic twinned ('geminate') particles. Binds the genomic viral ssDNA and shuttles it into and out of the cell nucleus. Plays a role in protection of the genome from degradation, virus acquisition and transmission by insect vectors, infectivity, and systemic movement. The CP of monopartite geminiviruses is absolutely essential for virus movement (By similarity).</text>
</comment>
<comment type="subunit">
    <text evidence="1">Homomultimer. Interacts with the movement protein. Binds to single-stranded and double-stranded viral DNA (By similarity).</text>
</comment>
<comment type="subcellular location">
    <subcellularLocation>
        <location evidence="1">Virion</location>
    </subcellularLocation>
    <subcellularLocation>
        <location>Host nucleus</location>
    </subcellularLocation>
    <text evidence="1">It is actively transported into the host cell nucleus. It may be exported out of the nucleus through a nuclear export signal for cell-to-cell movement and spread (By similarity).</text>
</comment>
<comment type="similarity">
    <text evidence="3">Belongs to the geminiviridae capsid protein family.</text>
</comment>
<evidence type="ECO:0000250" key="1"/>
<evidence type="ECO:0000256" key="2">
    <source>
        <dbReference type="SAM" id="MobiDB-lite"/>
    </source>
</evidence>
<evidence type="ECO:0000305" key="3"/>
<proteinExistence type="inferred from homology"/>
<organism>
    <name type="scientific">Maize streak virus genotype C (isolate Set)</name>
    <name type="common">MSV</name>
    <dbReference type="NCBI Taxonomy" id="268344"/>
    <lineage>
        <taxon>Viruses</taxon>
        <taxon>Monodnaviria</taxon>
        <taxon>Shotokuvirae</taxon>
        <taxon>Cressdnaviricota</taxon>
        <taxon>Repensiviricetes</taxon>
        <taxon>Geplafuvirales</taxon>
        <taxon>Geminiviridae</taxon>
        <taxon>Mastrevirus</taxon>
        <taxon>Maize streak virus</taxon>
    </lineage>
</organism>
<gene>
    <name type="ORF">V1</name>
</gene>
<name>CAPSD_MSVSE</name>
<sequence length="244" mass="26903">MSTSKRKRADEAQWNKRSTKKKGSAPQAKKPGGKVEKPSLQIQTLLHSGDTMITVPSGGVCDLINTYARGSDEGNRHTSETLTYKVGVDYHFVADAASCKYSNRGTGVMWLVYDTTPGGNAPTTQDIFAYPSALKAWPTTWKVSRELCHRFVVKRRWLFTMETDGRIGSDTPPSNQSWPPCKRNVDFHKFTSGLGVRTQWKNVTDGGVGAIQRGALYLVIAPGNGITFTAHGQTRLYFKSVGNQ</sequence>